<protein>
    <recommendedName>
        <fullName>Replication protein A 70 kDa DNA-binding subunit C</fullName>
        <shortName>AtRPA70c</shortName>
    </recommendedName>
    <alternativeName>
        <fullName>AtRPA1-2</fullName>
    </alternativeName>
    <alternativeName>
        <fullName>Replication factor A protein 1C</fullName>
    </alternativeName>
    <alternativeName>
        <fullName>Replication protein A 1C</fullName>
        <shortName>AtRPA1C</shortName>
    </alternativeName>
</protein>
<reference key="1">
    <citation type="journal article" date="1999" name="DNA Res.">
        <title>Structural analysis of Arabidopsis thaliana chromosome 5. IX. Sequence features of the regions of 1,011,550 bp covered by seventeen P1 and TAC clones.</title>
        <authorList>
            <person name="Kaneko T."/>
            <person name="Katoh T."/>
            <person name="Sato S."/>
            <person name="Nakamura Y."/>
            <person name="Asamizu E."/>
            <person name="Kotani H."/>
            <person name="Miyajima N."/>
            <person name="Tabata S."/>
        </authorList>
    </citation>
    <scope>NUCLEOTIDE SEQUENCE [LARGE SCALE GENOMIC DNA]</scope>
    <source>
        <strain>cv. Columbia</strain>
    </source>
</reference>
<reference key="2">
    <citation type="journal article" date="2017" name="Plant J.">
        <title>Araport11: a complete reannotation of the Arabidopsis thaliana reference genome.</title>
        <authorList>
            <person name="Cheng C.Y."/>
            <person name="Krishnakumar V."/>
            <person name="Chan A.P."/>
            <person name="Thibaud-Nissen F."/>
            <person name="Schobel S."/>
            <person name="Town C.D."/>
        </authorList>
    </citation>
    <scope>GENOME REANNOTATION</scope>
    <source>
        <strain>cv. Columbia</strain>
    </source>
</reference>
<proteinExistence type="inferred from homology"/>
<accession>Q9FHJ6</accession>
<organism>
    <name type="scientific">Arabidopsis thaliana</name>
    <name type="common">Mouse-ear cress</name>
    <dbReference type="NCBI Taxonomy" id="3702"/>
    <lineage>
        <taxon>Eukaryota</taxon>
        <taxon>Viridiplantae</taxon>
        <taxon>Streptophyta</taxon>
        <taxon>Embryophyta</taxon>
        <taxon>Tracheophyta</taxon>
        <taxon>Spermatophyta</taxon>
        <taxon>Magnoliopsida</taxon>
        <taxon>eudicotyledons</taxon>
        <taxon>Gunneridae</taxon>
        <taxon>Pentapetalae</taxon>
        <taxon>rosids</taxon>
        <taxon>malvids</taxon>
        <taxon>Brassicales</taxon>
        <taxon>Brassicaceae</taxon>
        <taxon>Camelineae</taxon>
        <taxon>Arabidopsis</taxon>
    </lineage>
</organism>
<evidence type="ECO:0000250" key="1"/>
<evidence type="ECO:0000255" key="2"/>
<evidence type="ECO:0000256" key="3">
    <source>
        <dbReference type="SAM" id="MobiDB-lite"/>
    </source>
</evidence>
<evidence type="ECO:0000305" key="4"/>
<dbReference type="EMBL" id="AB018113">
    <property type="protein sequence ID" value="BAB09168.1"/>
    <property type="molecule type" value="Genomic_DNA"/>
</dbReference>
<dbReference type="EMBL" id="CP002688">
    <property type="protein sequence ID" value="AED95244.1"/>
    <property type="molecule type" value="Genomic_DNA"/>
</dbReference>
<dbReference type="RefSeq" id="NP_199353.1">
    <property type="nucleotide sequence ID" value="NM_123908.2"/>
</dbReference>
<dbReference type="SMR" id="Q9FHJ6"/>
<dbReference type="FunCoup" id="Q9FHJ6">
    <property type="interactions" value="4274"/>
</dbReference>
<dbReference type="STRING" id="3702.Q9FHJ6"/>
<dbReference type="GlyGen" id="Q9FHJ6">
    <property type="glycosylation" value="1 site"/>
</dbReference>
<dbReference type="iPTMnet" id="Q9FHJ6"/>
<dbReference type="PaxDb" id="3702-AT5G45400.1"/>
<dbReference type="ProteomicsDB" id="236238"/>
<dbReference type="EnsemblPlants" id="AT5G45400.1">
    <property type="protein sequence ID" value="AT5G45400.1"/>
    <property type="gene ID" value="AT5G45400"/>
</dbReference>
<dbReference type="GeneID" id="834576"/>
<dbReference type="Gramene" id="AT5G45400.1">
    <property type="protein sequence ID" value="AT5G45400.1"/>
    <property type="gene ID" value="AT5G45400"/>
</dbReference>
<dbReference type="KEGG" id="ath:AT5G45400"/>
<dbReference type="Araport" id="AT5G45400"/>
<dbReference type="TAIR" id="AT5G45400">
    <property type="gene designation" value="RPA70C"/>
</dbReference>
<dbReference type="eggNOG" id="KOG0851">
    <property type="taxonomic scope" value="Eukaryota"/>
</dbReference>
<dbReference type="HOGENOM" id="CLU_012393_3_0_1"/>
<dbReference type="InParanoid" id="Q9FHJ6"/>
<dbReference type="OMA" id="CATISFM"/>
<dbReference type="PhylomeDB" id="Q9FHJ6"/>
<dbReference type="PRO" id="PR:Q9FHJ6"/>
<dbReference type="Proteomes" id="UP000006548">
    <property type="component" value="Chromosome 5"/>
</dbReference>
<dbReference type="ExpressionAtlas" id="Q9FHJ6">
    <property type="expression patterns" value="baseline and differential"/>
</dbReference>
<dbReference type="GO" id="GO:0005634">
    <property type="term" value="C:nucleus"/>
    <property type="evidence" value="ECO:0007669"/>
    <property type="project" value="UniProtKB-SubCell"/>
</dbReference>
<dbReference type="GO" id="GO:0003677">
    <property type="term" value="F:DNA binding"/>
    <property type="evidence" value="ECO:0007669"/>
    <property type="project" value="UniProtKB-KW"/>
</dbReference>
<dbReference type="GO" id="GO:0008270">
    <property type="term" value="F:zinc ion binding"/>
    <property type="evidence" value="ECO:0007669"/>
    <property type="project" value="UniProtKB-KW"/>
</dbReference>
<dbReference type="GO" id="GO:0006310">
    <property type="term" value="P:DNA recombination"/>
    <property type="evidence" value="ECO:0007669"/>
    <property type="project" value="UniProtKB-KW"/>
</dbReference>
<dbReference type="GO" id="GO:0006281">
    <property type="term" value="P:DNA repair"/>
    <property type="evidence" value="ECO:0007669"/>
    <property type="project" value="UniProtKB-KW"/>
</dbReference>
<dbReference type="GO" id="GO:0006260">
    <property type="term" value="P:DNA replication"/>
    <property type="evidence" value="ECO:0007669"/>
    <property type="project" value="UniProtKB-KW"/>
</dbReference>
<dbReference type="CDD" id="cd04474">
    <property type="entry name" value="RPA1_DBD_A"/>
    <property type="match status" value="1"/>
</dbReference>
<dbReference type="CDD" id="cd04475">
    <property type="entry name" value="RPA1_DBD_B"/>
    <property type="match status" value="1"/>
</dbReference>
<dbReference type="CDD" id="cd04476">
    <property type="entry name" value="RPA1_DBD_C"/>
    <property type="match status" value="1"/>
</dbReference>
<dbReference type="CDD" id="cd04477">
    <property type="entry name" value="RPA1N"/>
    <property type="match status" value="1"/>
</dbReference>
<dbReference type="FunFam" id="2.40.50.140:FF:000041">
    <property type="entry name" value="Replication protein A subunit"/>
    <property type="match status" value="1"/>
</dbReference>
<dbReference type="FunFam" id="2.40.50.140:FF:000064">
    <property type="entry name" value="Replication protein A subunit"/>
    <property type="match status" value="1"/>
</dbReference>
<dbReference type="FunFam" id="2.40.50.140:FF:000090">
    <property type="entry name" value="Replication protein A subunit"/>
    <property type="match status" value="1"/>
</dbReference>
<dbReference type="FunFam" id="2.40.50.140:FF:000117">
    <property type="entry name" value="Replication protein A subunit"/>
    <property type="match status" value="1"/>
</dbReference>
<dbReference type="Gene3D" id="2.40.50.140">
    <property type="entry name" value="Nucleic acid-binding proteins"/>
    <property type="match status" value="4"/>
</dbReference>
<dbReference type="InterPro" id="IPR047192">
    <property type="entry name" value="Euk_RPA1_DBD_C"/>
</dbReference>
<dbReference type="InterPro" id="IPR012340">
    <property type="entry name" value="NA-bd_OB-fold"/>
</dbReference>
<dbReference type="InterPro" id="IPR004365">
    <property type="entry name" value="NA-bd_OB_tRNA"/>
</dbReference>
<dbReference type="InterPro" id="IPR013955">
    <property type="entry name" value="Rep_factor-A_C"/>
</dbReference>
<dbReference type="InterPro" id="IPR007199">
    <property type="entry name" value="Rep_factor-A_N"/>
</dbReference>
<dbReference type="InterPro" id="IPR031657">
    <property type="entry name" value="REPA_OB_2"/>
</dbReference>
<dbReference type="InterPro" id="IPR004591">
    <property type="entry name" value="Rfa1"/>
</dbReference>
<dbReference type="NCBIfam" id="TIGR00617">
    <property type="entry name" value="rpa1"/>
    <property type="match status" value="1"/>
</dbReference>
<dbReference type="PANTHER" id="PTHR23273">
    <property type="entry name" value="REPLICATION FACTOR A 1, RFA1"/>
    <property type="match status" value="1"/>
</dbReference>
<dbReference type="PANTHER" id="PTHR23273:SF76">
    <property type="entry name" value="REPLICATION PROTEIN A 70 KDA DNA-BINDING SUBUNIT C"/>
    <property type="match status" value="1"/>
</dbReference>
<dbReference type="Pfam" id="PF04057">
    <property type="entry name" value="Rep-A_N"/>
    <property type="match status" value="1"/>
</dbReference>
<dbReference type="Pfam" id="PF08646">
    <property type="entry name" value="Rep_fac-A_C"/>
    <property type="match status" value="1"/>
</dbReference>
<dbReference type="Pfam" id="PF16900">
    <property type="entry name" value="REPA_OB_2"/>
    <property type="match status" value="1"/>
</dbReference>
<dbReference type="Pfam" id="PF01336">
    <property type="entry name" value="tRNA_anti-codon"/>
    <property type="match status" value="1"/>
</dbReference>
<dbReference type="SUPFAM" id="SSF50249">
    <property type="entry name" value="Nucleic acid-binding proteins"/>
    <property type="match status" value="4"/>
</dbReference>
<comment type="function">
    <text evidence="1">Component of the replication protein A complex (RPA) required for DNA recombination, repair and replication. The activity of RPA is mediated by single-stranded DNA binding and protein interactions. Probably involved in repair of double-strand DNA breaks (DSBs) induced by genotoxic stresses (By similarity).</text>
</comment>
<comment type="subunit">
    <text evidence="1">Heterotrimer of RPA1, RPA2 and RPA3 (canonical replication protein A complex).</text>
</comment>
<comment type="subcellular location">
    <subcellularLocation>
        <location evidence="1">Nucleus</location>
    </subcellularLocation>
</comment>
<comment type="similarity">
    <text evidence="4">Belongs to the replication factor A protein 1 family.</text>
</comment>
<name>RFA1C_ARATH</name>
<feature type="chain" id="PRO_0000422617" description="Replication protein A 70 kDa DNA-binding subunit C">
    <location>
        <begin position="1"/>
        <end position="853"/>
    </location>
</feature>
<feature type="DNA-binding region" description="OB">
    <location>
        <begin position="312"/>
        <end position="399"/>
    </location>
</feature>
<feature type="zinc finger region" description="C4-type" evidence="2">
    <location>
        <begin position="602"/>
        <end position="628"/>
    </location>
</feature>
<feature type="region of interest" description="Disordered" evidence="3">
    <location>
        <begin position="118"/>
        <end position="282"/>
    </location>
</feature>
<feature type="compositionally biased region" description="Polar residues" evidence="3">
    <location>
        <begin position="124"/>
        <end position="144"/>
    </location>
</feature>
<feature type="compositionally biased region" description="Polar residues" evidence="3">
    <location>
        <begin position="159"/>
        <end position="173"/>
    </location>
</feature>
<feature type="compositionally biased region" description="Polar residues" evidence="3">
    <location>
        <begin position="180"/>
        <end position="194"/>
    </location>
</feature>
<feature type="compositionally biased region" description="Polar residues" evidence="3">
    <location>
        <begin position="201"/>
        <end position="211"/>
    </location>
</feature>
<feature type="compositionally biased region" description="Polar residues" evidence="3">
    <location>
        <begin position="222"/>
        <end position="249"/>
    </location>
</feature>
<feature type="compositionally biased region" description="Polar residues" evidence="3">
    <location>
        <begin position="263"/>
        <end position="278"/>
    </location>
</feature>
<keyword id="KW-0227">DNA damage</keyword>
<keyword id="KW-0233">DNA recombination</keyword>
<keyword id="KW-0234">DNA repair</keyword>
<keyword id="KW-0235">DNA replication</keyword>
<keyword id="KW-0238">DNA-binding</keyword>
<keyword id="KW-0479">Metal-binding</keyword>
<keyword id="KW-0539">Nucleus</keyword>
<keyword id="KW-1185">Reference proteome</keyword>
<keyword id="KW-0862">Zinc</keyword>
<keyword id="KW-0863">Zinc-finger</keyword>
<gene>
    <name type="primary">RPA1C</name>
    <name type="synonym">RPA70C</name>
    <name type="ordered locus">At5g45400</name>
    <name type="ORF">MFC19.7</name>
</gene>
<sequence length="853" mass="94394">MAVSLTEGVVMKMLNGEVTSETDMMPVLQVTELKLIQSKLHQNQESSNRYKFLLSDGTDLAAGMLNTSLNSLVNQGTIQLGSVIRLTHYICNLIQTRRIVVIMQLEVIVEKCNIIGNPKEPGHSSINPQRGGVNTQSNGGSEQQQARRSDVNGGRYGVSANSPQPQVVHNSSDAGRYCVSANSPQPQVVHSSSDAGRYGVSANSPQRQVVHNSPDAGRYGQPQVSQRYGTGSGYPETSPSTRPYVSSNAGYGGSRQDQPRAPTATTAYSRPVQSAYQPQQPPMYVNRGPVARNEAPPRINPIAALNPYQGRWTIKVRVTSKADLRRFNNPRGEGKLFSFDLLDADGGEIRVTCFNDAVDQFFDKIVVGNVYLISRGNLKPAQKNFNHLPNDYEIHLDSASTIQPCEDDGTIPRYHFHFRNIGDIENMENNSTTDVIGIVSSISPTVAIMRKNLTEVQKRSLQLKDMSGRSVEVTMWGNFCNAEGQKLQNLCDSGVFPVLALKAGRIGEFNGKQVSTIGASQFFIEPDFPEARELRQWYEREGRNAHFTSISREFSGVGRQEVRKVIAQIKDEKLGTSEKPDWITVCATISFMKVENFCYTACPIMNGDRPCSKKVTNNGDGTWRCEKCDKCVDECDYRYILQIQLQDHTDLTWATAFQEAGEEIMGMSAKDLYYVKYENQDEEKFEDIIRSVAFTKYIFKLKIKEETYSDEQRVKATVVKAEKLNYSSNTRFMLEAIDKLKIGDANSLPIKAESSNYRSDAFNSGVGTSGTRDTASVDARREFGLPAANQVGQYGNQYSSDARSLGGFTSCNVCRSNSHVSANCPTLMSEPQGQYMGGTNAGGGMPRQHVGSY</sequence>